<proteinExistence type="inferred from homology"/>
<evidence type="ECO:0000255" key="1">
    <source>
        <dbReference type="HAMAP-Rule" id="MF_01367"/>
    </source>
</evidence>
<evidence type="ECO:0000305" key="2"/>
<keyword id="KW-1185">Reference proteome</keyword>
<keyword id="KW-0687">Ribonucleoprotein</keyword>
<keyword id="KW-0689">Ribosomal protein</keyword>
<keyword id="KW-0694">RNA-binding</keyword>
<keyword id="KW-0699">rRNA-binding</keyword>
<dbReference type="EMBL" id="AP009256">
    <property type="protein sequence ID" value="BAF39112.1"/>
    <property type="molecule type" value="Genomic_DNA"/>
</dbReference>
<dbReference type="RefSeq" id="WP_003808038.1">
    <property type="nucleotide sequence ID" value="NC_008618.1"/>
</dbReference>
<dbReference type="SMR" id="A1A079"/>
<dbReference type="STRING" id="367928.BAD_0331"/>
<dbReference type="PaxDb" id="1680-BADO_0338"/>
<dbReference type="GeneID" id="45582230"/>
<dbReference type="GeneID" id="92942223"/>
<dbReference type="KEGG" id="bad:BAD_0331"/>
<dbReference type="HOGENOM" id="CLU_095071_2_1_11"/>
<dbReference type="Proteomes" id="UP000008702">
    <property type="component" value="Chromosome"/>
</dbReference>
<dbReference type="GO" id="GO:0022625">
    <property type="term" value="C:cytosolic large ribosomal subunit"/>
    <property type="evidence" value="ECO:0007669"/>
    <property type="project" value="TreeGrafter"/>
</dbReference>
<dbReference type="GO" id="GO:0070180">
    <property type="term" value="F:large ribosomal subunit rRNA binding"/>
    <property type="evidence" value="ECO:0007669"/>
    <property type="project" value="TreeGrafter"/>
</dbReference>
<dbReference type="GO" id="GO:0003735">
    <property type="term" value="F:structural constituent of ribosome"/>
    <property type="evidence" value="ECO:0007669"/>
    <property type="project" value="InterPro"/>
</dbReference>
<dbReference type="GO" id="GO:0006412">
    <property type="term" value="P:translation"/>
    <property type="evidence" value="ECO:0007669"/>
    <property type="project" value="UniProtKB-UniRule"/>
</dbReference>
<dbReference type="CDD" id="cd00337">
    <property type="entry name" value="Ribosomal_uL14"/>
    <property type="match status" value="1"/>
</dbReference>
<dbReference type="FunFam" id="2.40.150.20:FF:000001">
    <property type="entry name" value="50S ribosomal protein L14"/>
    <property type="match status" value="1"/>
</dbReference>
<dbReference type="Gene3D" id="2.40.150.20">
    <property type="entry name" value="Ribosomal protein L14"/>
    <property type="match status" value="1"/>
</dbReference>
<dbReference type="HAMAP" id="MF_01367">
    <property type="entry name" value="Ribosomal_uL14"/>
    <property type="match status" value="1"/>
</dbReference>
<dbReference type="InterPro" id="IPR000218">
    <property type="entry name" value="Ribosomal_uL14"/>
</dbReference>
<dbReference type="InterPro" id="IPR005745">
    <property type="entry name" value="Ribosomal_uL14_bac-type"/>
</dbReference>
<dbReference type="InterPro" id="IPR019972">
    <property type="entry name" value="Ribosomal_uL14_CS"/>
</dbReference>
<dbReference type="InterPro" id="IPR036853">
    <property type="entry name" value="Ribosomal_uL14_sf"/>
</dbReference>
<dbReference type="NCBIfam" id="TIGR01067">
    <property type="entry name" value="rplN_bact"/>
    <property type="match status" value="1"/>
</dbReference>
<dbReference type="PANTHER" id="PTHR11761">
    <property type="entry name" value="50S/60S RIBOSOMAL PROTEIN L14/L23"/>
    <property type="match status" value="1"/>
</dbReference>
<dbReference type="PANTHER" id="PTHR11761:SF3">
    <property type="entry name" value="LARGE RIBOSOMAL SUBUNIT PROTEIN UL14M"/>
    <property type="match status" value="1"/>
</dbReference>
<dbReference type="Pfam" id="PF00238">
    <property type="entry name" value="Ribosomal_L14"/>
    <property type="match status" value="1"/>
</dbReference>
<dbReference type="SMART" id="SM01374">
    <property type="entry name" value="Ribosomal_L14"/>
    <property type="match status" value="1"/>
</dbReference>
<dbReference type="SUPFAM" id="SSF50193">
    <property type="entry name" value="Ribosomal protein L14"/>
    <property type="match status" value="1"/>
</dbReference>
<dbReference type="PROSITE" id="PS00049">
    <property type="entry name" value="RIBOSOMAL_L14"/>
    <property type="match status" value="1"/>
</dbReference>
<comment type="function">
    <text evidence="1">Binds to 23S rRNA. Forms part of two intersubunit bridges in the 70S ribosome.</text>
</comment>
<comment type="subunit">
    <text evidence="1">Part of the 50S ribosomal subunit. Forms a cluster with proteins L3 and L19. In the 70S ribosome, L14 and L19 interact and together make contacts with the 16S rRNA in bridges B5 and B8.</text>
</comment>
<comment type="similarity">
    <text evidence="1">Belongs to the universal ribosomal protein uL14 family.</text>
</comment>
<accession>A1A079</accession>
<organism>
    <name type="scientific">Bifidobacterium adolescentis (strain ATCC 15703 / DSM 20083 / NCTC 11814 / E194a)</name>
    <dbReference type="NCBI Taxonomy" id="367928"/>
    <lineage>
        <taxon>Bacteria</taxon>
        <taxon>Bacillati</taxon>
        <taxon>Actinomycetota</taxon>
        <taxon>Actinomycetes</taxon>
        <taxon>Bifidobacteriales</taxon>
        <taxon>Bifidobacteriaceae</taxon>
        <taxon>Bifidobacterium</taxon>
    </lineage>
</organism>
<reference key="1">
    <citation type="submission" date="2006-12" db="EMBL/GenBank/DDBJ databases">
        <title>Bifidobacterium adolescentis complete genome sequence.</title>
        <authorList>
            <person name="Suzuki T."/>
            <person name="Tsuda Y."/>
            <person name="Kanou N."/>
            <person name="Inoue T."/>
            <person name="Kumazaki K."/>
            <person name="Nagano S."/>
            <person name="Hirai S."/>
            <person name="Tanaka K."/>
            <person name="Watanabe K."/>
        </authorList>
    </citation>
    <scope>NUCLEOTIDE SEQUENCE [LARGE SCALE GENOMIC DNA]</scope>
    <source>
        <strain>ATCC 15703 / DSM 20083 / NCTC 11814 / E194a</strain>
    </source>
</reference>
<name>RL14_BIFAA</name>
<sequence>MIQQETRLHVADNTGAKELLAIRVLGGSKRRYAGIGDVIVASVKDAIPGGSVKKGDVVKAVVVRTVKEHRRVDGSYIKFDENAAVILGSGREPKGTRIFGPVGRELRDKRFMKIVSLAPEVI</sequence>
<feature type="chain" id="PRO_1000055521" description="Large ribosomal subunit protein uL14">
    <location>
        <begin position="1"/>
        <end position="122"/>
    </location>
</feature>
<gene>
    <name evidence="1" type="primary">rplN</name>
    <name type="ordered locus">BAD_0331</name>
</gene>
<protein>
    <recommendedName>
        <fullName evidence="1">Large ribosomal subunit protein uL14</fullName>
    </recommendedName>
    <alternativeName>
        <fullName evidence="2">50S ribosomal protein L14</fullName>
    </alternativeName>
</protein>